<accession>P06898</accession>
<comment type="function">
    <text>Core component of nucleosome. Nucleosomes wrap and compact DNA into chromatin, limiting DNA accessibility to the cellular machineries which require DNA as a template. Histones thereby play a central role in transcription regulation, DNA repair, DNA replication and chromosomal stability. DNA accessibility is regulated via a complex set of post-translational modifications of histones, also called histone code, and nucleosome remodeling.</text>
</comment>
<comment type="subunit">
    <text>The nucleosome is a histone octamer containing two molecules each of H2A, H2B, H3 and H4 assembled in one H3-H4 heterotetramer and two H2A-H2B heterodimers. The octamer wraps approximately 147 bp of DNA.</text>
</comment>
<comment type="subcellular location">
    <subcellularLocation>
        <location>Nucleus</location>
    </subcellularLocation>
    <subcellularLocation>
        <location>Chromosome</location>
    </subcellularLocation>
</comment>
<comment type="PTM">
    <text evidence="1">Monoubiquitination of Lys-120 (H2AK119Ub) gives a specific tag for epigenetic transcriptional repression. Following DNA double-strand breaks (DSBs), it is ubiquitinated through 'Lys-63' linkage of ubiquitin moieties, leading to the recruitment of repair proteins to sites of DNA damage. H2AK119Ub and ionizing radiation-induced 'Lys-63'-linked ubiquitination are distinct events (By similarity).</text>
</comment>
<comment type="PTM">
    <text evidence="1">Phosphorylation on Ser-2 is enhanced during mitosis. Phosphorylation on Ser-2 directly represses transcription (By similarity).</text>
</comment>
<comment type="PTM">
    <text evidence="1">Glutamine methylation at Gln-105 (H2AQ104me) by FBL is specifically dedicated to polymerase I. It is present at 35S ribosomal DNA locus and impairs binding of the FACT complex (By similarity).</text>
</comment>
<comment type="similarity">
    <text evidence="5">Belongs to the histone H2A family.</text>
</comment>
<evidence type="ECO:0000250" key="1"/>
<evidence type="ECO:0000250" key="2">
    <source>
        <dbReference type="UniProtKB" id="P0C0S5"/>
    </source>
</evidence>
<evidence type="ECO:0000250" key="3">
    <source>
        <dbReference type="UniProtKB" id="P0C0S8"/>
    </source>
</evidence>
<evidence type="ECO:0000256" key="4">
    <source>
        <dbReference type="SAM" id="MobiDB-lite"/>
    </source>
</evidence>
<evidence type="ECO:0000305" key="5"/>
<name>H2A2_XENLA</name>
<reference key="1">
    <citation type="journal article" date="1985" name="J. Mol. Biol.">
        <title>Genomic organization and nucleotide sequence of two distinct histone gene clusters from Xenopus laevis. Identification of novel conserved upstream sequence elements.</title>
        <authorList>
            <person name="Perry M."/>
            <person name="Thomsen G.H."/>
            <person name="Roeder R.G."/>
        </authorList>
    </citation>
    <scope>NUCLEOTIDE SEQUENCE [GENOMIC DNA] (GENE CLUSTER X1H1)</scope>
</reference>
<sequence length="130" mass="14000">MSGRGKQGGKTRAKSKTRSSRAGLQFPVGRVHRLLRKGNYAERVGAGAPVYLAAVLEYLTAEILELAWERLPEITKRPVLSPGTCNSLCNDEELNKLLGGVTIAQGGVLPNIQSVLLPKKTESSKSTKSK</sequence>
<proteinExistence type="inferred from homology"/>
<protein>
    <recommendedName>
        <fullName>Histone H2A type 2</fullName>
    </recommendedName>
</protein>
<dbReference type="EMBL" id="X03017">
    <property type="protein sequence ID" value="CAA26810.1"/>
    <property type="molecule type" value="Genomic_DNA"/>
</dbReference>
<dbReference type="EMBL" id="M21286">
    <property type="protein sequence ID" value="AAA49762.1"/>
    <property type="molecule type" value="Genomic_DNA"/>
</dbReference>
<dbReference type="PIR" id="I24510">
    <property type="entry name" value="HSXLA2"/>
</dbReference>
<dbReference type="PIR" id="I51445">
    <property type="entry name" value="I51445"/>
</dbReference>
<dbReference type="SMR" id="P06898"/>
<dbReference type="Proteomes" id="UP000186698">
    <property type="component" value="Unplaced"/>
</dbReference>
<dbReference type="GO" id="GO:0000786">
    <property type="term" value="C:nucleosome"/>
    <property type="evidence" value="ECO:0007669"/>
    <property type="project" value="UniProtKB-KW"/>
</dbReference>
<dbReference type="GO" id="GO:0005634">
    <property type="term" value="C:nucleus"/>
    <property type="evidence" value="ECO:0007669"/>
    <property type="project" value="UniProtKB-SubCell"/>
</dbReference>
<dbReference type="GO" id="GO:0003677">
    <property type="term" value="F:DNA binding"/>
    <property type="evidence" value="ECO:0007669"/>
    <property type="project" value="UniProtKB-KW"/>
</dbReference>
<dbReference type="GO" id="GO:0046982">
    <property type="term" value="F:protein heterodimerization activity"/>
    <property type="evidence" value="ECO:0007669"/>
    <property type="project" value="InterPro"/>
</dbReference>
<dbReference type="GO" id="GO:0030527">
    <property type="term" value="F:structural constituent of chromatin"/>
    <property type="evidence" value="ECO:0007669"/>
    <property type="project" value="InterPro"/>
</dbReference>
<dbReference type="CDD" id="cd00074">
    <property type="entry name" value="HFD_H2A"/>
    <property type="match status" value="1"/>
</dbReference>
<dbReference type="FunFam" id="1.10.20.10:FF:000103">
    <property type="entry name" value="Histone H2A type 1"/>
    <property type="match status" value="1"/>
</dbReference>
<dbReference type="Gene3D" id="1.10.20.10">
    <property type="entry name" value="Histone, subunit A"/>
    <property type="match status" value="1"/>
</dbReference>
<dbReference type="InterPro" id="IPR009072">
    <property type="entry name" value="Histone-fold"/>
</dbReference>
<dbReference type="InterPro" id="IPR002119">
    <property type="entry name" value="Histone_H2A"/>
</dbReference>
<dbReference type="InterPro" id="IPR007125">
    <property type="entry name" value="Histone_H2A/H2B/H3"/>
</dbReference>
<dbReference type="InterPro" id="IPR032454">
    <property type="entry name" value="Histone_H2A_C"/>
</dbReference>
<dbReference type="InterPro" id="IPR032458">
    <property type="entry name" value="Histone_H2A_CS"/>
</dbReference>
<dbReference type="PANTHER" id="PTHR23430">
    <property type="entry name" value="HISTONE H2A"/>
    <property type="match status" value="1"/>
</dbReference>
<dbReference type="Pfam" id="PF00125">
    <property type="entry name" value="Histone"/>
    <property type="match status" value="1"/>
</dbReference>
<dbReference type="Pfam" id="PF16211">
    <property type="entry name" value="Histone_H2A_C"/>
    <property type="match status" value="1"/>
</dbReference>
<dbReference type="PRINTS" id="PR00620">
    <property type="entry name" value="HISTONEH2A"/>
</dbReference>
<dbReference type="SMART" id="SM00414">
    <property type="entry name" value="H2A"/>
    <property type="match status" value="1"/>
</dbReference>
<dbReference type="SUPFAM" id="SSF47113">
    <property type="entry name" value="Histone-fold"/>
    <property type="match status" value="1"/>
</dbReference>
<dbReference type="PROSITE" id="PS00046">
    <property type="entry name" value="HISTONE_H2A"/>
    <property type="match status" value="1"/>
</dbReference>
<feature type="initiator methionine" description="Removed" evidence="1">
    <location>
        <position position="1"/>
    </location>
</feature>
<feature type="chain" id="PRO_0000055295" description="Histone H2A type 2">
    <location>
        <begin position="2"/>
        <end position="130"/>
    </location>
</feature>
<feature type="region of interest" description="Disordered" evidence="4">
    <location>
        <begin position="1"/>
        <end position="22"/>
    </location>
</feature>
<feature type="compositionally biased region" description="Basic residues" evidence="4">
    <location>
        <begin position="7"/>
        <end position="19"/>
    </location>
</feature>
<feature type="modified residue" description="N-acetylserine" evidence="1">
    <location>
        <position position="2"/>
    </location>
</feature>
<feature type="modified residue" description="Phosphoserine" evidence="1">
    <location>
        <position position="2"/>
    </location>
</feature>
<feature type="modified residue" description="N6-(2-hydroxyisobutyryl)lysine" evidence="3">
    <location>
        <position position="6"/>
    </location>
</feature>
<feature type="modified residue" description="N6-acetyllysine" evidence="1">
    <location>
        <position position="6"/>
    </location>
</feature>
<feature type="modified residue" description="N6-(2-hydroxyisobutyryl)lysine; alternate" evidence="3">
    <location>
        <position position="10"/>
    </location>
</feature>
<feature type="modified residue" description="N6-lactoyllysine; alternate" evidence="2">
    <location>
        <position position="10"/>
    </location>
</feature>
<feature type="modified residue" description="N6-succinyllysine" evidence="3">
    <location>
        <position position="10"/>
    </location>
</feature>
<feature type="modified residue" description="N6-(2-hydroxyisobutyryl)lysine; alternate" evidence="3">
    <location>
        <position position="37"/>
    </location>
</feature>
<feature type="modified residue" description="N6-(2-hydroxyisobutyryl)lysine" evidence="3">
    <location>
        <position position="76"/>
    </location>
</feature>
<feature type="modified residue" description="N6-(2-hydroxyisobutyryl)lysine; alternate" evidence="3">
    <location>
        <position position="96"/>
    </location>
</feature>
<feature type="modified residue" description="N6-glutaryllysine; alternate" evidence="3">
    <location>
        <position position="96"/>
    </location>
</feature>
<feature type="modified residue" description="N6-succinyllysine" evidence="3">
    <location>
        <position position="96"/>
    </location>
</feature>
<feature type="modified residue" description="N5-methylglutamine" evidence="1">
    <location>
        <position position="105"/>
    </location>
</feature>
<feature type="modified residue" description="N6-(2-hydroxyisobutyryl)lysine; alternate" evidence="3">
    <location>
        <position position="119"/>
    </location>
</feature>
<feature type="modified residue" description="N6-glutaryllysine; alternate" evidence="3">
    <location>
        <position position="119"/>
    </location>
</feature>
<feature type="cross-link" description="Glycyl lysine isopeptide (Lys-Gly) (interchain with G-Cter in ubiquitin)" evidence="1">
    <location>
        <position position="14"/>
    </location>
</feature>
<feature type="cross-link" description="Glycyl lysine isopeptide (Lys-Gly) (interchain with G-Cter in ubiquitin)" evidence="1">
    <location>
        <position position="16"/>
    </location>
</feature>
<feature type="cross-link" description="Glycyl lysine isopeptide (Lys-Gly) (interchain with G-Cter in ubiquitin)" evidence="1">
    <location>
        <position position="120"/>
    </location>
</feature>
<organism>
    <name type="scientific">Xenopus laevis</name>
    <name type="common">African clawed frog</name>
    <dbReference type="NCBI Taxonomy" id="8355"/>
    <lineage>
        <taxon>Eukaryota</taxon>
        <taxon>Metazoa</taxon>
        <taxon>Chordata</taxon>
        <taxon>Craniata</taxon>
        <taxon>Vertebrata</taxon>
        <taxon>Euteleostomi</taxon>
        <taxon>Amphibia</taxon>
        <taxon>Batrachia</taxon>
        <taxon>Anura</taxon>
        <taxon>Pipoidea</taxon>
        <taxon>Pipidae</taxon>
        <taxon>Xenopodinae</taxon>
        <taxon>Xenopus</taxon>
        <taxon>Xenopus</taxon>
    </lineage>
</organism>
<keyword id="KW-0007">Acetylation</keyword>
<keyword id="KW-0158">Chromosome</keyword>
<keyword id="KW-0238">DNA-binding</keyword>
<keyword id="KW-0379">Hydroxylation</keyword>
<keyword id="KW-1017">Isopeptide bond</keyword>
<keyword id="KW-0488">Methylation</keyword>
<keyword id="KW-0544">Nucleosome core</keyword>
<keyword id="KW-0539">Nucleus</keyword>
<keyword id="KW-0597">Phosphoprotein</keyword>
<keyword id="KW-1185">Reference proteome</keyword>
<keyword id="KW-0832">Ubl conjugation</keyword>